<gene>
    <name evidence="1" type="primary">accD</name>
    <name type="ordered locus">Bphy_4377</name>
</gene>
<accession>B2JQF1</accession>
<sequence>MSWLDKLLPPKIKQTDPKSRKGIPEGLWIKCPSCEAVLYRNDVEANLHVCPKCDHHMRIGARERLDGLLDPEGRYEIGQEILPVDALKFKDSRKYPDRLKEAMDETDETDAMVVMGGAIHTLPVVVACFEFAFMGGSMGSVVGERFARGAQNALEQNVPFICFTASGGARMQESLLSLMQMAKTTAMLTKLSEAKLPFISVLTDPTMGGVSASFAFLGDVVIAEPKALIGFAGPRVIEQTVREKLPEGFQRAEFLLQKGAIDMIVDRRKLREELAQLMALLTRQPADAVA</sequence>
<name>ACCD_PARP8</name>
<comment type="function">
    <text evidence="1">Component of the acetyl coenzyme A carboxylase (ACC) complex. Biotin carboxylase (BC) catalyzes the carboxylation of biotin on its carrier protein (BCCP) and then the CO(2) group is transferred by the transcarboxylase to acetyl-CoA to form malonyl-CoA.</text>
</comment>
<comment type="catalytic activity">
    <reaction evidence="1">
        <text>N(6)-carboxybiotinyl-L-lysyl-[protein] + acetyl-CoA = N(6)-biotinyl-L-lysyl-[protein] + malonyl-CoA</text>
        <dbReference type="Rhea" id="RHEA:54728"/>
        <dbReference type="Rhea" id="RHEA-COMP:10505"/>
        <dbReference type="Rhea" id="RHEA-COMP:10506"/>
        <dbReference type="ChEBI" id="CHEBI:57288"/>
        <dbReference type="ChEBI" id="CHEBI:57384"/>
        <dbReference type="ChEBI" id="CHEBI:83144"/>
        <dbReference type="ChEBI" id="CHEBI:83145"/>
        <dbReference type="EC" id="2.1.3.15"/>
    </reaction>
</comment>
<comment type="cofactor">
    <cofactor evidence="1">
        <name>Zn(2+)</name>
        <dbReference type="ChEBI" id="CHEBI:29105"/>
    </cofactor>
    <text evidence="1">Binds 1 zinc ion per subunit.</text>
</comment>
<comment type="pathway">
    <text evidence="1">Lipid metabolism; malonyl-CoA biosynthesis; malonyl-CoA from acetyl-CoA: step 1/1.</text>
</comment>
<comment type="subunit">
    <text evidence="1">Acetyl-CoA carboxylase is a heterohexamer composed of biotin carboxyl carrier protein (AccB), biotin carboxylase (AccC) and two subunits each of ACCase subunit alpha (AccA) and ACCase subunit beta (AccD).</text>
</comment>
<comment type="subcellular location">
    <subcellularLocation>
        <location evidence="1">Cytoplasm</location>
    </subcellularLocation>
</comment>
<comment type="similarity">
    <text evidence="1">Belongs to the AccD/PCCB family.</text>
</comment>
<proteinExistence type="inferred from homology"/>
<evidence type="ECO:0000255" key="1">
    <source>
        <dbReference type="HAMAP-Rule" id="MF_01395"/>
    </source>
</evidence>
<evidence type="ECO:0000255" key="2">
    <source>
        <dbReference type="PROSITE-ProRule" id="PRU01136"/>
    </source>
</evidence>
<organism>
    <name type="scientific">Paraburkholderia phymatum (strain DSM 17167 / CIP 108236 / LMG 21445 / STM815)</name>
    <name type="common">Burkholderia phymatum</name>
    <dbReference type="NCBI Taxonomy" id="391038"/>
    <lineage>
        <taxon>Bacteria</taxon>
        <taxon>Pseudomonadati</taxon>
        <taxon>Pseudomonadota</taxon>
        <taxon>Betaproteobacteria</taxon>
        <taxon>Burkholderiales</taxon>
        <taxon>Burkholderiaceae</taxon>
        <taxon>Paraburkholderia</taxon>
    </lineage>
</organism>
<keyword id="KW-0067">ATP-binding</keyword>
<keyword id="KW-0963">Cytoplasm</keyword>
<keyword id="KW-0275">Fatty acid biosynthesis</keyword>
<keyword id="KW-0276">Fatty acid metabolism</keyword>
<keyword id="KW-0444">Lipid biosynthesis</keyword>
<keyword id="KW-0443">Lipid metabolism</keyword>
<keyword id="KW-0479">Metal-binding</keyword>
<keyword id="KW-0547">Nucleotide-binding</keyword>
<keyword id="KW-1185">Reference proteome</keyword>
<keyword id="KW-0808">Transferase</keyword>
<keyword id="KW-0862">Zinc</keyword>
<keyword id="KW-0863">Zinc-finger</keyword>
<protein>
    <recommendedName>
        <fullName evidence="1">Acetyl-coenzyme A carboxylase carboxyl transferase subunit beta</fullName>
        <shortName evidence="1">ACCase subunit beta</shortName>
        <shortName evidence="1">Acetyl-CoA carboxylase carboxyltransferase subunit beta</shortName>
        <ecNumber evidence="1">2.1.3.15</ecNumber>
    </recommendedName>
</protein>
<dbReference type="EC" id="2.1.3.15" evidence="1"/>
<dbReference type="EMBL" id="CP001044">
    <property type="protein sequence ID" value="ACC73492.1"/>
    <property type="molecule type" value="Genomic_DNA"/>
</dbReference>
<dbReference type="RefSeq" id="WP_012403665.1">
    <property type="nucleotide sequence ID" value="NC_010623.1"/>
</dbReference>
<dbReference type="SMR" id="B2JQF1"/>
<dbReference type="STRING" id="391038.Bphy_4377"/>
<dbReference type="KEGG" id="bph:Bphy_4377"/>
<dbReference type="eggNOG" id="COG0777">
    <property type="taxonomic scope" value="Bacteria"/>
</dbReference>
<dbReference type="HOGENOM" id="CLU_015486_1_0_4"/>
<dbReference type="OrthoDB" id="9772975at2"/>
<dbReference type="UniPathway" id="UPA00655">
    <property type="reaction ID" value="UER00711"/>
</dbReference>
<dbReference type="Proteomes" id="UP000001192">
    <property type="component" value="Chromosome 2"/>
</dbReference>
<dbReference type="GO" id="GO:0009329">
    <property type="term" value="C:acetate CoA-transferase complex"/>
    <property type="evidence" value="ECO:0007669"/>
    <property type="project" value="TreeGrafter"/>
</dbReference>
<dbReference type="GO" id="GO:0003989">
    <property type="term" value="F:acetyl-CoA carboxylase activity"/>
    <property type="evidence" value="ECO:0007669"/>
    <property type="project" value="InterPro"/>
</dbReference>
<dbReference type="GO" id="GO:0005524">
    <property type="term" value="F:ATP binding"/>
    <property type="evidence" value="ECO:0007669"/>
    <property type="project" value="UniProtKB-KW"/>
</dbReference>
<dbReference type="GO" id="GO:0016743">
    <property type="term" value="F:carboxyl- or carbamoyltransferase activity"/>
    <property type="evidence" value="ECO:0007669"/>
    <property type="project" value="UniProtKB-UniRule"/>
</dbReference>
<dbReference type="GO" id="GO:0008270">
    <property type="term" value="F:zinc ion binding"/>
    <property type="evidence" value="ECO:0007669"/>
    <property type="project" value="UniProtKB-UniRule"/>
</dbReference>
<dbReference type="GO" id="GO:0006633">
    <property type="term" value="P:fatty acid biosynthetic process"/>
    <property type="evidence" value="ECO:0007669"/>
    <property type="project" value="UniProtKB-KW"/>
</dbReference>
<dbReference type="GO" id="GO:2001295">
    <property type="term" value="P:malonyl-CoA biosynthetic process"/>
    <property type="evidence" value="ECO:0007669"/>
    <property type="project" value="UniProtKB-UniRule"/>
</dbReference>
<dbReference type="Gene3D" id="3.90.226.10">
    <property type="entry name" value="2-enoyl-CoA Hydratase, Chain A, domain 1"/>
    <property type="match status" value="1"/>
</dbReference>
<dbReference type="HAMAP" id="MF_01395">
    <property type="entry name" value="AcetylCoA_CT_beta"/>
    <property type="match status" value="1"/>
</dbReference>
<dbReference type="InterPro" id="IPR034733">
    <property type="entry name" value="AcCoA_carboxyl_beta"/>
</dbReference>
<dbReference type="InterPro" id="IPR000438">
    <property type="entry name" value="Acetyl_CoA_COase_Trfase_b_su"/>
</dbReference>
<dbReference type="InterPro" id="IPR029045">
    <property type="entry name" value="ClpP/crotonase-like_dom_sf"/>
</dbReference>
<dbReference type="InterPro" id="IPR011762">
    <property type="entry name" value="COA_CT_N"/>
</dbReference>
<dbReference type="InterPro" id="IPR041010">
    <property type="entry name" value="Znf-ACC"/>
</dbReference>
<dbReference type="NCBIfam" id="TIGR00515">
    <property type="entry name" value="accD"/>
    <property type="match status" value="1"/>
</dbReference>
<dbReference type="PANTHER" id="PTHR42995">
    <property type="entry name" value="ACETYL-COENZYME A CARBOXYLASE CARBOXYL TRANSFERASE SUBUNIT BETA, CHLOROPLASTIC"/>
    <property type="match status" value="1"/>
</dbReference>
<dbReference type="PANTHER" id="PTHR42995:SF5">
    <property type="entry name" value="ACETYL-COENZYME A CARBOXYLASE CARBOXYL TRANSFERASE SUBUNIT BETA, CHLOROPLASTIC"/>
    <property type="match status" value="1"/>
</dbReference>
<dbReference type="Pfam" id="PF01039">
    <property type="entry name" value="Carboxyl_trans"/>
    <property type="match status" value="1"/>
</dbReference>
<dbReference type="Pfam" id="PF17848">
    <property type="entry name" value="Zn_ribbon_ACC"/>
    <property type="match status" value="1"/>
</dbReference>
<dbReference type="PRINTS" id="PR01070">
    <property type="entry name" value="ACCCTRFRASEB"/>
</dbReference>
<dbReference type="SUPFAM" id="SSF52096">
    <property type="entry name" value="ClpP/crotonase"/>
    <property type="match status" value="1"/>
</dbReference>
<dbReference type="PROSITE" id="PS50980">
    <property type="entry name" value="COA_CT_NTER"/>
    <property type="match status" value="1"/>
</dbReference>
<reference key="1">
    <citation type="journal article" date="2014" name="Stand. Genomic Sci.">
        <title>Complete genome sequence of Burkholderia phymatum STM815(T), a broad host range and efficient nitrogen-fixing symbiont of Mimosa species.</title>
        <authorList>
            <person name="Moulin L."/>
            <person name="Klonowska A."/>
            <person name="Caroline B."/>
            <person name="Booth K."/>
            <person name="Vriezen J.A."/>
            <person name="Melkonian R."/>
            <person name="James E.K."/>
            <person name="Young J.P."/>
            <person name="Bena G."/>
            <person name="Hauser L."/>
            <person name="Land M."/>
            <person name="Kyrpides N."/>
            <person name="Bruce D."/>
            <person name="Chain P."/>
            <person name="Copeland A."/>
            <person name="Pitluck S."/>
            <person name="Woyke T."/>
            <person name="Lizotte-Waniewski M."/>
            <person name="Bristow J."/>
            <person name="Riley M."/>
        </authorList>
    </citation>
    <scope>NUCLEOTIDE SEQUENCE [LARGE SCALE GENOMIC DNA]</scope>
    <source>
        <strain>DSM 17167 / CIP 108236 / LMG 21445 / STM815</strain>
    </source>
</reference>
<feature type="chain" id="PRO_0000358961" description="Acetyl-coenzyme A carboxylase carboxyl transferase subunit beta">
    <location>
        <begin position="1"/>
        <end position="290"/>
    </location>
</feature>
<feature type="domain" description="CoA carboxyltransferase N-terminal" evidence="2">
    <location>
        <begin position="27"/>
        <end position="290"/>
    </location>
</feature>
<feature type="zinc finger region" description="C4-type" evidence="1">
    <location>
        <begin position="31"/>
        <end position="53"/>
    </location>
</feature>
<feature type="binding site" evidence="1">
    <location>
        <position position="31"/>
    </location>
    <ligand>
        <name>Zn(2+)</name>
        <dbReference type="ChEBI" id="CHEBI:29105"/>
    </ligand>
</feature>
<feature type="binding site" evidence="1">
    <location>
        <position position="34"/>
    </location>
    <ligand>
        <name>Zn(2+)</name>
        <dbReference type="ChEBI" id="CHEBI:29105"/>
    </ligand>
</feature>
<feature type="binding site" evidence="1">
    <location>
        <position position="50"/>
    </location>
    <ligand>
        <name>Zn(2+)</name>
        <dbReference type="ChEBI" id="CHEBI:29105"/>
    </ligand>
</feature>
<feature type="binding site" evidence="1">
    <location>
        <position position="53"/>
    </location>
    <ligand>
        <name>Zn(2+)</name>
        <dbReference type="ChEBI" id="CHEBI:29105"/>
    </ligand>
</feature>